<keyword id="KW-1003">Cell membrane</keyword>
<keyword id="KW-0472">Membrane</keyword>
<keyword id="KW-1185">Reference proteome</keyword>
<keyword id="KW-0812">Transmembrane</keyword>
<keyword id="KW-1133">Transmembrane helix</keyword>
<dbReference type="EMBL" id="U00089">
    <property type="protein sequence ID" value="AAB96146.1"/>
    <property type="molecule type" value="Genomic_DNA"/>
</dbReference>
<dbReference type="PIR" id="S73824">
    <property type="entry name" value="S73824"/>
</dbReference>
<dbReference type="RefSeq" id="NP_110026.1">
    <property type="nucleotide sequence ID" value="NC_000912.1"/>
</dbReference>
<dbReference type="RefSeq" id="WP_010874694.1">
    <property type="nucleotide sequence ID" value="NZ_OU342337.1"/>
</dbReference>
<dbReference type="STRING" id="272634.MPN_338"/>
<dbReference type="EnsemblBacteria" id="AAB96146">
    <property type="protein sequence ID" value="AAB96146"/>
    <property type="gene ID" value="MPN_338"/>
</dbReference>
<dbReference type="KEGG" id="mpn:MPN_338"/>
<dbReference type="PATRIC" id="fig|272634.6.peg.362"/>
<dbReference type="HOGENOM" id="CLU_416089_0_0_14"/>
<dbReference type="OrthoDB" id="394382at2"/>
<dbReference type="BioCyc" id="MPNE272634:G1GJ3-534-MONOMER"/>
<dbReference type="Proteomes" id="UP000000808">
    <property type="component" value="Chromosome"/>
</dbReference>
<dbReference type="GO" id="GO:0005886">
    <property type="term" value="C:plasma membrane"/>
    <property type="evidence" value="ECO:0007669"/>
    <property type="project" value="UniProtKB-SubCell"/>
</dbReference>
<dbReference type="NCBIfam" id="NF045750">
    <property type="entry name" value="MPN338"/>
    <property type="match status" value="1"/>
</dbReference>
<sequence>MEFNKLQLSHCISFYISDVSEVFFESINQHPSRDFVNNILQKIKSTLSEEELEKLNTIEEVTKDEKILIMLNHVLKKIVSKTGSSSCDLFQIVKHDRFNEPVYIQSVNAFENNLINNEFAERRYDYLIEINKHSYLRKYVNAIRISFFLDLRAQILSGSFTLDVINKQLEHQNKEELFQAIYLRSLIKHFISNQLYPISLNSFIFGDKNRENKTVENDKLSVLKNNWNQIFFSKYFDFVAKNKEERVVDNNCDELFYATMNTLLIMLIIIEELRVYFNSKEPALILKLLDNKVSLREDPDQNPETDLHELIKFAEKNYLEKEKTSRWHKKRVKSLEELLEEIKQINLETKNESLAYPDEIVELELDNVHNFVSTKQVFRHQLDLQTLHGIVINPERYGIGMWSNHFVDWEEFKDLIEQITDAENGSDLYGFEKDLDESICQVNKKYLTFISSDSSSFLIIKNDQTKVISNYVWAQLYFETRRWIINDIEYDLYEKGFDKSHFASNIALLESLNFNWLDPFYGLTSIKEIMQKIDSKSNLKTSIAEMVAKFKHEQRISKKDNERVLMIFAYVAAAVVGFINFFSMVFTILTVSDLNAGLTPANIVVIAIASLLALFLIVIAVLFRFRWKYIKH</sequence>
<accession>P75440</accession>
<comment type="subcellular location">
    <subcellularLocation>
        <location evidence="2">Cell membrane</location>
        <topology evidence="2">Multi-pass membrane protein</topology>
    </subcellularLocation>
</comment>
<protein>
    <recommendedName>
        <fullName>Uncharacterized protein MG242 homolog</fullName>
    </recommendedName>
</protein>
<gene>
    <name type="ordered locus">MPN_338</name>
    <name type="ORF">F10_orf632o</name>
    <name type="ORF">MP498</name>
</gene>
<feature type="chain" id="PRO_0000210482" description="Uncharacterized protein MG242 homolog">
    <location>
        <begin position="1"/>
        <end position="632"/>
    </location>
</feature>
<feature type="transmembrane region" description="Helical" evidence="1">
    <location>
        <begin position="255"/>
        <end position="275"/>
    </location>
</feature>
<feature type="transmembrane region" description="Helical" evidence="1">
    <location>
        <begin position="506"/>
        <end position="526"/>
    </location>
</feature>
<feature type="transmembrane region" description="Helical" evidence="1">
    <location>
        <begin position="566"/>
        <end position="586"/>
    </location>
</feature>
<feature type="transmembrane region" description="Helical" evidence="1">
    <location>
        <begin position="603"/>
        <end position="623"/>
    </location>
</feature>
<reference key="1">
    <citation type="journal article" date="1996" name="Nucleic Acids Res.">
        <title>Complete sequence analysis of the genome of the bacterium Mycoplasma pneumoniae.</title>
        <authorList>
            <person name="Himmelreich R."/>
            <person name="Hilbert H."/>
            <person name="Plagens H."/>
            <person name="Pirkl E."/>
            <person name="Li B.-C."/>
            <person name="Herrmann R."/>
        </authorList>
    </citation>
    <scope>NUCLEOTIDE SEQUENCE [LARGE SCALE GENOMIC DNA]</scope>
    <source>
        <strain>ATCC 29342 / M129 / Subtype 1</strain>
    </source>
</reference>
<name>Y338_MYCPN</name>
<evidence type="ECO:0000255" key="1"/>
<evidence type="ECO:0000305" key="2"/>
<proteinExistence type="predicted"/>
<organism>
    <name type="scientific">Mycoplasma pneumoniae (strain ATCC 29342 / M129 / Subtype 1)</name>
    <name type="common">Mycoplasmoides pneumoniae</name>
    <dbReference type="NCBI Taxonomy" id="272634"/>
    <lineage>
        <taxon>Bacteria</taxon>
        <taxon>Bacillati</taxon>
        <taxon>Mycoplasmatota</taxon>
        <taxon>Mycoplasmoidales</taxon>
        <taxon>Mycoplasmoidaceae</taxon>
        <taxon>Mycoplasmoides</taxon>
    </lineage>
</organism>